<name>Y609B_MYCTU</name>
<proteinExistence type="evidence at protein level"/>
<keyword id="KW-1185">Reference proteome</keyword>
<protein>
    <recommendedName>
        <fullName evidence="1">Uncharacterized protein Rv0609B</fullName>
    </recommendedName>
</protein>
<accession>P0DN33</accession>
<feature type="chain" id="PRO_0000434781" description="Uncharacterized protein Rv0609B">
    <location>
        <begin position="1"/>
        <end position="65"/>
    </location>
</feature>
<gene>
    <name evidence="1" type="ordered locus">Rv0609B</name>
</gene>
<evidence type="ECO:0000305" key="1"/>
<sequence length="65" mass="7110">MTDEKCVRCGGDQLVEGAVVWNAPLRFKREGAGHFNRGTQVNAVACETCGHIDLYLESRARGSTK</sequence>
<dbReference type="EMBL" id="AL123456">
    <property type="status" value="NOT_ANNOTATED_CDS"/>
    <property type="molecule type" value="Genomic_DNA"/>
</dbReference>
<dbReference type="InParanoid" id="P0DN33"/>
<dbReference type="Proteomes" id="UP000001584">
    <property type="component" value="Chromosome"/>
</dbReference>
<organism>
    <name type="scientific">Mycobacterium tuberculosis (strain ATCC 25618 / H37Rv)</name>
    <dbReference type="NCBI Taxonomy" id="83332"/>
    <lineage>
        <taxon>Bacteria</taxon>
        <taxon>Bacillati</taxon>
        <taxon>Actinomycetota</taxon>
        <taxon>Actinomycetes</taxon>
        <taxon>Mycobacteriales</taxon>
        <taxon>Mycobacteriaceae</taxon>
        <taxon>Mycobacterium</taxon>
        <taxon>Mycobacterium tuberculosis complex</taxon>
    </lineage>
</organism>
<reference key="1">
    <citation type="journal article" date="1998" name="Nature">
        <title>Deciphering the biology of Mycobacterium tuberculosis from the complete genome sequence.</title>
        <authorList>
            <person name="Cole S.T."/>
            <person name="Brosch R."/>
            <person name="Parkhill J."/>
            <person name="Garnier T."/>
            <person name="Churcher C.M."/>
            <person name="Harris D.E."/>
            <person name="Gordon S.V."/>
            <person name="Eiglmeier K."/>
            <person name="Gas S."/>
            <person name="Barry C.E. III"/>
            <person name="Tekaia F."/>
            <person name="Badcock K."/>
            <person name="Basham D."/>
            <person name="Brown D."/>
            <person name="Chillingworth T."/>
            <person name="Connor R."/>
            <person name="Davies R.M."/>
            <person name="Devlin K."/>
            <person name="Feltwell T."/>
            <person name="Gentles S."/>
            <person name="Hamlin N."/>
            <person name="Holroyd S."/>
            <person name="Hornsby T."/>
            <person name="Jagels K."/>
            <person name="Krogh A."/>
            <person name="McLean J."/>
            <person name="Moule S."/>
            <person name="Murphy L.D."/>
            <person name="Oliver S."/>
            <person name="Osborne J."/>
            <person name="Quail M.A."/>
            <person name="Rajandream M.A."/>
            <person name="Rogers J."/>
            <person name="Rutter S."/>
            <person name="Seeger K."/>
            <person name="Skelton S."/>
            <person name="Squares S."/>
            <person name="Squares R."/>
            <person name="Sulston J.E."/>
            <person name="Taylor K."/>
            <person name="Whitehead S."/>
            <person name="Barrell B.G."/>
        </authorList>
    </citation>
    <scope>NUCLEOTIDE SEQUENCE [LARGE SCALE GENOMIC DNA]</scope>
    <source>
        <strain>ATCC 25618 / H37Rv</strain>
    </source>
</reference>
<reference key="2">
    <citation type="journal article" date="2011" name="Mol. Cell. Proteomics">
        <title>Proteogenomic analysis of Mycobacterium tuberculosis by high resolution mass spectrometry.</title>
        <authorList>
            <person name="Kelkar D.S."/>
            <person name="Kumar D."/>
            <person name="Kumar P."/>
            <person name="Balakrishnan L."/>
            <person name="Muthusamy B."/>
            <person name="Yadav A.K."/>
            <person name="Shrivastava P."/>
            <person name="Marimuthu A."/>
            <person name="Anand S."/>
            <person name="Sundaram H."/>
            <person name="Kingsbury R."/>
            <person name="Harsha H.C."/>
            <person name="Nair B."/>
            <person name="Prasad T.S."/>
            <person name="Chauhan D.S."/>
            <person name="Katoch K."/>
            <person name="Katoch V.M."/>
            <person name="Kumar P."/>
            <person name="Chaerkady R."/>
            <person name="Ramachandran S."/>
            <person name="Dash D."/>
            <person name="Pandey A."/>
        </authorList>
    </citation>
    <scope>IDENTIFICATION BY MASS SPECTROMETRY [LARGE SCALE ANALYSIS]</scope>
    <source>
        <strain>ATCC 25618 / H37Rv</strain>
    </source>
</reference>